<organism>
    <name type="scientific">Nostoc sp. (strain PCC 7120 / SAG 25.82 / UTEX 2576)</name>
    <dbReference type="NCBI Taxonomy" id="103690"/>
    <lineage>
        <taxon>Bacteria</taxon>
        <taxon>Bacillati</taxon>
        <taxon>Cyanobacteriota</taxon>
        <taxon>Cyanophyceae</taxon>
        <taxon>Nostocales</taxon>
        <taxon>Nostocaceae</taxon>
        <taxon>Nostoc</taxon>
    </lineage>
</organism>
<keyword id="KW-0030">Aminoacyl-tRNA synthetase</keyword>
<keyword id="KW-0067">ATP-binding</keyword>
<keyword id="KW-0963">Cytoplasm</keyword>
<keyword id="KW-0436">Ligase</keyword>
<keyword id="KW-0547">Nucleotide-binding</keyword>
<keyword id="KW-0648">Protein biosynthesis</keyword>
<keyword id="KW-1185">Reference proteome</keyword>
<reference key="1">
    <citation type="journal article" date="2001" name="DNA Res.">
        <title>Complete genomic sequence of the filamentous nitrogen-fixing cyanobacterium Anabaena sp. strain PCC 7120.</title>
        <authorList>
            <person name="Kaneko T."/>
            <person name="Nakamura Y."/>
            <person name="Wolk C.P."/>
            <person name="Kuritz T."/>
            <person name="Sasamoto S."/>
            <person name="Watanabe A."/>
            <person name="Iriguchi M."/>
            <person name="Ishikawa A."/>
            <person name="Kawashima K."/>
            <person name="Kimura T."/>
            <person name="Kishida Y."/>
            <person name="Kohara M."/>
            <person name="Matsumoto M."/>
            <person name="Matsuno A."/>
            <person name="Muraki A."/>
            <person name="Nakazaki N."/>
            <person name="Shimpo S."/>
            <person name="Sugimoto M."/>
            <person name="Takazawa M."/>
            <person name="Yamada M."/>
            <person name="Yasuda M."/>
            <person name="Tabata S."/>
        </authorList>
    </citation>
    <scope>NUCLEOTIDE SEQUENCE [LARGE SCALE GENOMIC DNA]</scope>
    <source>
        <strain>PCC 7120 / SAG 25.82 / UTEX 2576</strain>
    </source>
</reference>
<accession>Q8YXE4</accession>
<comment type="function">
    <text evidence="1">Catalyzes the attachment of tryptophan to tRNA(Trp).</text>
</comment>
<comment type="catalytic activity">
    <reaction evidence="1">
        <text>tRNA(Trp) + L-tryptophan + ATP = L-tryptophyl-tRNA(Trp) + AMP + diphosphate + H(+)</text>
        <dbReference type="Rhea" id="RHEA:24080"/>
        <dbReference type="Rhea" id="RHEA-COMP:9671"/>
        <dbReference type="Rhea" id="RHEA-COMP:9705"/>
        <dbReference type="ChEBI" id="CHEBI:15378"/>
        <dbReference type="ChEBI" id="CHEBI:30616"/>
        <dbReference type="ChEBI" id="CHEBI:33019"/>
        <dbReference type="ChEBI" id="CHEBI:57912"/>
        <dbReference type="ChEBI" id="CHEBI:78442"/>
        <dbReference type="ChEBI" id="CHEBI:78535"/>
        <dbReference type="ChEBI" id="CHEBI:456215"/>
        <dbReference type="EC" id="6.1.1.2"/>
    </reaction>
</comment>
<comment type="subunit">
    <text evidence="1">Homodimer.</text>
</comment>
<comment type="subcellular location">
    <subcellularLocation>
        <location evidence="1">Cytoplasm</location>
    </subcellularLocation>
</comment>
<comment type="similarity">
    <text evidence="1">Belongs to the class-I aminoacyl-tRNA synthetase family.</text>
</comment>
<protein>
    <recommendedName>
        <fullName evidence="1">Tryptophan--tRNA ligase</fullName>
        <ecNumber evidence="1">6.1.1.2</ecNumber>
    </recommendedName>
    <alternativeName>
        <fullName evidence="1">Tryptophanyl-tRNA synthetase</fullName>
        <shortName evidence="1">TrpRS</shortName>
    </alternativeName>
</protein>
<evidence type="ECO:0000255" key="1">
    <source>
        <dbReference type="HAMAP-Rule" id="MF_00140"/>
    </source>
</evidence>
<proteinExistence type="inferred from homology"/>
<sequence>MGKQRVLSGVQPTGNLHLGNYLGAIRNWVEIQDQYDNFFCVVDLHAITVPHNPATLAADTYAIAALYLACGIDLKYSNIFVQSHVSAHSELAWFLNCITPLNWLQDMIQFKEKAVKQGENVGAGLLIYPVLMAADILLYQADKVPVGEDQKQHLELTRDIVNRFNHQFAKDKPVMKLPEPLIRKEGARVMSLTDGTRKMSKSDPSELSRINLLDPPDQIANKIKRCKTDPVKGLTFDDPERPECNNLLTLYMLLSGKKKEEVAAECQDMGWGQFKPLFTETAINALKPIQEKYQEITADKGYLESVLRDGREKAETVANQTLADVKAALGYSAPV</sequence>
<gene>
    <name evidence="1" type="primary">trpS</name>
    <name type="ordered locus">all1269</name>
</gene>
<dbReference type="EC" id="6.1.1.2" evidence="1"/>
<dbReference type="EMBL" id="BA000019">
    <property type="protein sequence ID" value="BAB73226.1"/>
    <property type="molecule type" value="Genomic_DNA"/>
</dbReference>
<dbReference type="PIR" id="AB1965">
    <property type="entry name" value="AB1965"/>
</dbReference>
<dbReference type="RefSeq" id="WP_010995441.1">
    <property type="nucleotide sequence ID" value="NZ_RSCN01000021.1"/>
</dbReference>
<dbReference type="SMR" id="Q8YXE4"/>
<dbReference type="STRING" id="103690.gene:10493283"/>
<dbReference type="KEGG" id="ana:all1269"/>
<dbReference type="eggNOG" id="COG0180">
    <property type="taxonomic scope" value="Bacteria"/>
</dbReference>
<dbReference type="OrthoDB" id="9801042at2"/>
<dbReference type="Proteomes" id="UP000002483">
    <property type="component" value="Chromosome"/>
</dbReference>
<dbReference type="GO" id="GO:0005737">
    <property type="term" value="C:cytoplasm"/>
    <property type="evidence" value="ECO:0007669"/>
    <property type="project" value="UniProtKB-SubCell"/>
</dbReference>
<dbReference type="GO" id="GO:0005524">
    <property type="term" value="F:ATP binding"/>
    <property type="evidence" value="ECO:0007669"/>
    <property type="project" value="UniProtKB-UniRule"/>
</dbReference>
<dbReference type="GO" id="GO:0004830">
    <property type="term" value="F:tryptophan-tRNA ligase activity"/>
    <property type="evidence" value="ECO:0007669"/>
    <property type="project" value="UniProtKB-UniRule"/>
</dbReference>
<dbReference type="GO" id="GO:0006436">
    <property type="term" value="P:tryptophanyl-tRNA aminoacylation"/>
    <property type="evidence" value="ECO:0007669"/>
    <property type="project" value="UniProtKB-UniRule"/>
</dbReference>
<dbReference type="CDD" id="cd00806">
    <property type="entry name" value="TrpRS_core"/>
    <property type="match status" value="1"/>
</dbReference>
<dbReference type="FunFam" id="1.10.240.10:FF:000002">
    <property type="entry name" value="Tryptophan--tRNA ligase"/>
    <property type="match status" value="1"/>
</dbReference>
<dbReference type="Gene3D" id="3.40.50.620">
    <property type="entry name" value="HUPs"/>
    <property type="match status" value="1"/>
</dbReference>
<dbReference type="Gene3D" id="1.10.240.10">
    <property type="entry name" value="Tyrosyl-Transfer RNA Synthetase"/>
    <property type="match status" value="1"/>
</dbReference>
<dbReference type="HAMAP" id="MF_00140_B">
    <property type="entry name" value="Trp_tRNA_synth_B"/>
    <property type="match status" value="1"/>
</dbReference>
<dbReference type="InterPro" id="IPR001412">
    <property type="entry name" value="aa-tRNA-synth_I_CS"/>
</dbReference>
<dbReference type="InterPro" id="IPR002305">
    <property type="entry name" value="aa-tRNA-synth_Ic"/>
</dbReference>
<dbReference type="InterPro" id="IPR014729">
    <property type="entry name" value="Rossmann-like_a/b/a_fold"/>
</dbReference>
<dbReference type="InterPro" id="IPR002306">
    <property type="entry name" value="Trp-tRNA-ligase"/>
</dbReference>
<dbReference type="InterPro" id="IPR024109">
    <property type="entry name" value="Trp-tRNA-ligase_bac-type"/>
</dbReference>
<dbReference type="InterPro" id="IPR050203">
    <property type="entry name" value="Trp-tRNA_synthetase"/>
</dbReference>
<dbReference type="NCBIfam" id="TIGR00233">
    <property type="entry name" value="trpS"/>
    <property type="match status" value="1"/>
</dbReference>
<dbReference type="PANTHER" id="PTHR43766">
    <property type="entry name" value="TRYPTOPHAN--TRNA LIGASE, MITOCHONDRIAL"/>
    <property type="match status" value="1"/>
</dbReference>
<dbReference type="PANTHER" id="PTHR43766:SF1">
    <property type="entry name" value="TRYPTOPHAN--TRNA LIGASE, MITOCHONDRIAL"/>
    <property type="match status" value="1"/>
</dbReference>
<dbReference type="Pfam" id="PF00579">
    <property type="entry name" value="tRNA-synt_1b"/>
    <property type="match status" value="1"/>
</dbReference>
<dbReference type="PRINTS" id="PR01039">
    <property type="entry name" value="TRNASYNTHTRP"/>
</dbReference>
<dbReference type="SUPFAM" id="SSF52374">
    <property type="entry name" value="Nucleotidylyl transferase"/>
    <property type="match status" value="1"/>
</dbReference>
<dbReference type="PROSITE" id="PS00178">
    <property type="entry name" value="AA_TRNA_LIGASE_I"/>
    <property type="match status" value="1"/>
</dbReference>
<feature type="chain" id="PRO_0000136597" description="Tryptophan--tRNA ligase">
    <location>
        <begin position="1"/>
        <end position="335"/>
    </location>
</feature>
<feature type="short sequence motif" description="'HIGH' region" evidence="1">
    <location>
        <begin position="12"/>
        <end position="20"/>
    </location>
</feature>
<feature type="short sequence motif" description="'KMSKS' region" evidence="1">
    <location>
        <begin position="198"/>
        <end position="202"/>
    </location>
</feature>
<feature type="binding site" evidence="1">
    <location>
        <begin position="11"/>
        <end position="13"/>
    </location>
    <ligand>
        <name>ATP</name>
        <dbReference type="ChEBI" id="CHEBI:30616"/>
    </ligand>
</feature>
<feature type="binding site" evidence="1">
    <location>
        <begin position="19"/>
        <end position="20"/>
    </location>
    <ligand>
        <name>ATP</name>
        <dbReference type="ChEBI" id="CHEBI:30616"/>
    </ligand>
</feature>
<feature type="binding site" evidence="1">
    <location>
        <position position="135"/>
    </location>
    <ligand>
        <name>L-tryptophan</name>
        <dbReference type="ChEBI" id="CHEBI:57912"/>
    </ligand>
</feature>
<feature type="binding site" evidence="1">
    <location>
        <begin position="147"/>
        <end position="149"/>
    </location>
    <ligand>
        <name>ATP</name>
        <dbReference type="ChEBI" id="CHEBI:30616"/>
    </ligand>
</feature>
<feature type="binding site" evidence="1">
    <location>
        <position position="189"/>
    </location>
    <ligand>
        <name>ATP</name>
        <dbReference type="ChEBI" id="CHEBI:30616"/>
    </ligand>
</feature>
<feature type="binding site" evidence="1">
    <location>
        <begin position="198"/>
        <end position="202"/>
    </location>
    <ligand>
        <name>ATP</name>
        <dbReference type="ChEBI" id="CHEBI:30616"/>
    </ligand>
</feature>
<name>SYW_NOSS1</name>